<name>MAPK2_HUMAN</name>
<gene>
    <name type="primary">MAPKAPK2</name>
</gene>
<sequence length="400" mass="45568">MLSNSQGQSPPVPFPAPAPPPQPPTPALPHPPAQPPPPPPQQFPQFHVKSGLQIKKNAIIDDYKVTSQVLGLGINGKVLQIFNKRTQEKFALKMLQDCPKARREVELHWRASQCPHIVRIVDVYENLYAGRKCLLIVMECLDGGELFSRIQDRGDQAFTEREASEIMKSIGEAIQYLHSINIAHRDVKPENLLYTSKRPNAILKLTDFGFAKETTSHNSLTTPCYTPYYVAPEVLGPEKYDKSCDMWSLGVIMYILLCGYPPFYSNHGLAISPGMKTRIRMGQYEFPNPEWSEVSEEVKMLIRNLLKTEPTQRMTITEFMNHPWIMQSTKVPQTPLHTSRVLKEDKERWEDVKEEMTSALATMRVDYEQIKIKKIEDASNPLLLKRRKKARALEAAALAH</sequence>
<feature type="chain" id="PRO_0000086288" description="MAP kinase-activated protein kinase 2">
    <location>
        <begin position="1"/>
        <end position="400"/>
    </location>
</feature>
<feature type="domain" description="Protein kinase" evidence="2">
    <location>
        <begin position="64"/>
        <end position="325"/>
    </location>
</feature>
<feature type="region of interest" description="Disordered" evidence="3">
    <location>
        <begin position="1"/>
        <end position="43"/>
    </location>
</feature>
<feature type="region of interest" description="Autoinhibitory helix" evidence="1">
    <location>
        <begin position="328"/>
        <end position="364"/>
    </location>
</feature>
<feature type="region of interest" description="p38 MAPK-binding site">
    <location>
        <begin position="366"/>
        <end position="390"/>
    </location>
</feature>
<feature type="short sequence motif" description="Nuclear export signal (NES)">
    <location>
        <begin position="356"/>
        <end position="365"/>
    </location>
</feature>
<feature type="short sequence motif" description="Bipartite nuclear localization signal 1">
    <location>
        <begin position="371"/>
        <end position="374"/>
    </location>
</feature>
<feature type="short sequence motif" description="Bipartite nuclear localization signal 2">
    <location>
        <begin position="385"/>
        <end position="389"/>
    </location>
</feature>
<feature type="compositionally biased region" description="Pro residues" evidence="3">
    <location>
        <begin position="10"/>
        <end position="42"/>
    </location>
</feature>
<feature type="active site" description="Proton acceptor">
    <location>
        <position position="186"/>
    </location>
</feature>
<feature type="binding site" evidence="2">
    <location>
        <begin position="70"/>
        <end position="78"/>
    </location>
    <ligand>
        <name>ATP</name>
        <dbReference type="ChEBI" id="CHEBI:30616"/>
    </ligand>
</feature>
<feature type="binding site" evidence="2">
    <location>
        <position position="93"/>
    </location>
    <ligand>
        <name>ATP</name>
        <dbReference type="ChEBI" id="CHEBI:30616"/>
    </ligand>
</feature>
<feature type="binding site">
    <location>
        <begin position="139"/>
        <end position="141"/>
    </location>
    <ligand>
        <name>staurosporine</name>
        <dbReference type="ChEBI" id="CHEBI:57491"/>
    </ligand>
</feature>
<feature type="modified residue" description="Phosphoserine" evidence="30">
    <location>
        <position position="9"/>
    </location>
</feature>
<feature type="modified residue" description="Phosphothreonine" evidence="30">
    <location>
        <position position="25"/>
    </location>
</feature>
<feature type="modified residue" description="Phosphothreonine; by MAPK14" evidence="30">
    <location>
        <position position="222"/>
    </location>
</feature>
<feature type="modified residue" description="Phosphoserine; by MAPK14" evidence="30">
    <location>
        <position position="272"/>
    </location>
</feature>
<feature type="modified residue" description="Phosphoserine; by autocatalysis" evidence="1">
    <location>
        <position position="328"/>
    </location>
</feature>
<feature type="modified residue" description="Phosphothreonine; by MAPK14" evidence="30 33 34">
    <location>
        <position position="334"/>
    </location>
</feature>
<feature type="cross-link" description="Glycyl lysine isopeptide (Lys-Gly) (interchain with G-Cter in SUMO)" evidence="25">
    <location>
        <position position="353"/>
    </location>
</feature>
<feature type="splice variant" id="VSP_004910" description="In isoform 2." evidence="31">
    <original>EEMTSALATMRVDYEQIKIKKIEDASNPLLLKRRKKARALEAAALAH</original>
    <variation>GCLHDKNSDQATWLTRL</variation>
    <location>
        <begin position="354"/>
        <end position="400"/>
    </location>
</feature>
<feature type="sequence variant" id="VAR_040753" description="In dbSNP:rs35671930." evidence="17">
    <original>A</original>
    <variation>G</variation>
    <location>
        <position position="173"/>
    </location>
</feature>
<feature type="sequence variant" id="VAR_040754" description="In dbSNP:rs55894011." evidence="17">
    <original>A</original>
    <variation>S</variation>
    <location>
        <position position="361"/>
    </location>
</feature>
<feature type="mutagenesis site" description="Kinase defective mutant, abolishes activity." evidence="10">
    <original>K</original>
    <variation>R</variation>
    <location>
        <position position="93"/>
    </location>
</feature>
<feature type="mutagenesis site" description="Kinase defective mutant, abolishes activity." evidence="30">
    <original>D</original>
    <variation>A</variation>
    <location>
        <position position="207"/>
    </location>
</feature>
<feature type="mutagenesis site" description="Strong decrease in kinase activity." evidence="10 11 30">
    <original>T</original>
    <variation>A</variation>
    <location>
        <position position="222"/>
    </location>
</feature>
<feature type="mutagenesis site" description="Mimicks phosphorylation state, leading to slight increase of basal kinase activity." evidence="10 11 30">
    <original>T</original>
    <variation>D</variation>
    <location>
        <position position="222"/>
    </location>
</feature>
<feature type="mutagenesis site" description="Mimicks phosphorylation state and constitutive protein kinase activity; when associated with E-334." evidence="10 11 30">
    <original>T</original>
    <variation>E</variation>
    <location>
        <position position="222"/>
    </location>
</feature>
<feature type="mutagenesis site" description="Strong decrease in kinase activity." evidence="30">
    <original>S</original>
    <variation>A</variation>
    <location>
        <position position="272"/>
    </location>
</feature>
<feature type="mutagenesis site" description="Mimicks phosphorylation state, leading to slight increase of basal kinase activity." evidence="30">
    <original>S</original>
    <variation>D</variation>
    <location>
        <position position="272"/>
    </location>
</feature>
<feature type="mutagenesis site" description="Slight decrease in kinase activity." evidence="10 11 30">
    <original>T</original>
    <variation>A</variation>
    <location>
        <position position="334"/>
    </location>
</feature>
<feature type="mutagenesis site" description="Mimicks phosphorylation state, leading to elevated basal kinase activity." evidence="10 11 30">
    <original>T</original>
    <variation>D</variation>
    <variation>E</variation>
    <location>
        <position position="334"/>
    </location>
</feature>
<feature type="mutagenesis site" description="Mimicks phosphorylation state and constitutive protein kinase activity; when associated with E-222." evidence="10 11 30">
    <original>T</original>
    <variation>E</variation>
    <location>
        <position position="334"/>
    </location>
</feature>
<feature type="mutagenesis site" description="Induces decreased sumoylation and increase in protein kinase activity." evidence="25">
    <original>K</original>
    <variation>R</variation>
    <location>
        <position position="353"/>
    </location>
</feature>
<feature type="sequence conflict" description="In Ref. 5; CAA53094." evidence="32" ref="5">
    <original>H</original>
    <variation>D</variation>
    <location>
        <position position="116"/>
    </location>
</feature>
<feature type="sequence conflict" description="In Ref. 5; CAA53094." evidence="32" ref="5">
    <original>WS</original>
    <variation>LV</variation>
    <location>
        <begin position="247"/>
        <end position="248"/>
    </location>
</feature>
<feature type="helix" evidence="36">
    <location>
        <begin position="45"/>
        <end position="47"/>
    </location>
</feature>
<feature type="strand" evidence="36">
    <location>
        <begin position="48"/>
        <end position="50"/>
    </location>
</feature>
<feature type="helix" evidence="40">
    <location>
        <begin position="59"/>
        <end position="61"/>
    </location>
</feature>
<feature type="strand" evidence="40">
    <location>
        <begin position="63"/>
        <end position="73"/>
    </location>
</feature>
<feature type="strand" evidence="40">
    <location>
        <begin position="76"/>
        <end position="83"/>
    </location>
</feature>
<feature type="turn" evidence="40">
    <location>
        <begin position="84"/>
        <end position="86"/>
    </location>
</feature>
<feature type="strand" evidence="40">
    <location>
        <begin position="89"/>
        <end position="96"/>
    </location>
</feature>
<feature type="helix" evidence="40">
    <location>
        <begin position="99"/>
        <end position="111"/>
    </location>
</feature>
<feature type="strand" evidence="39">
    <location>
        <begin position="114"/>
        <end position="117"/>
    </location>
</feature>
<feature type="strand" evidence="40">
    <location>
        <begin position="120"/>
        <end position="128"/>
    </location>
</feature>
<feature type="strand" evidence="40">
    <location>
        <begin position="131"/>
        <end position="138"/>
    </location>
</feature>
<feature type="strand" evidence="36">
    <location>
        <begin position="143"/>
        <end position="145"/>
    </location>
</feature>
<feature type="helix" evidence="40">
    <location>
        <begin position="146"/>
        <end position="152"/>
    </location>
</feature>
<feature type="helix" evidence="44">
    <location>
        <begin position="154"/>
        <end position="156"/>
    </location>
</feature>
<feature type="helix" evidence="40">
    <location>
        <begin position="160"/>
        <end position="179"/>
    </location>
</feature>
<feature type="helix" evidence="40">
    <location>
        <begin position="189"/>
        <end position="191"/>
    </location>
</feature>
<feature type="strand" evidence="40">
    <location>
        <begin position="192"/>
        <end position="198"/>
    </location>
</feature>
<feature type="strand" evidence="40">
    <location>
        <begin position="203"/>
        <end position="205"/>
    </location>
</feature>
<feature type="strand" evidence="42">
    <location>
        <begin position="212"/>
        <end position="214"/>
    </location>
</feature>
<feature type="helix" evidence="44">
    <location>
        <begin position="227"/>
        <end position="229"/>
    </location>
</feature>
<feature type="helix" evidence="36">
    <location>
        <begin position="232"/>
        <end position="234"/>
    </location>
</feature>
<feature type="helix" evidence="40">
    <location>
        <begin position="239"/>
        <end position="242"/>
    </location>
</feature>
<feature type="helix" evidence="40">
    <location>
        <begin position="243"/>
        <end position="258"/>
    </location>
</feature>
<feature type="strand" evidence="43">
    <location>
        <begin position="264"/>
        <end position="266"/>
    </location>
</feature>
<feature type="strand" evidence="35">
    <location>
        <begin position="267"/>
        <end position="269"/>
    </location>
</feature>
<feature type="helix" evidence="36">
    <location>
        <begin position="275"/>
        <end position="281"/>
    </location>
</feature>
<feature type="strand" evidence="38">
    <location>
        <begin position="283"/>
        <end position="285"/>
    </location>
</feature>
<feature type="helix" evidence="40">
    <location>
        <begin position="288"/>
        <end position="291"/>
    </location>
</feature>
<feature type="strand" evidence="44">
    <location>
        <begin position="292"/>
        <end position="294"/>
    </location>
</feature>
<feature type="helix" evidence="40">
    <location>
        <begin position="296"/>
        <end position="305"/>
    </location>
</feature>
<feature type="turn" evidence="40">
    <location>
        <begin position="310"/>
        <end position="312"/>
    </location>
</feature>
<feature type="helix" evidence="40">
    <location>
        <begin position="316"/>
        <end position="320"/>
    </location>
</feature>
<feature type="helix" evidence="40">
    <location>
        <begin position="323"/>
        <end position="326"/>
    </location>
</feature>
<feature type="helix" evidence="40">
    <location>
        <begin position="328"/>
        <end position="330"/>
    </location>
</feature>
<feature type="strand" evidence="41">
    <location>
        <begin position="335"/>
        <end position="337"/>
    </location>
</feature>
<feature type="helix" evidence="40">
    <location>
        <begin position="338"/>
        <end position="344"/>
    </location>
</feature>
<feature type="helix" evidence="40">
    <location>
        <begin position="346"/>
        <end position="348"/>
    </location>
</feature>
<feature type="helix" evidence="40">
    <location>
        <begin position="349"/>
        <end position="363"/>
    </location>
</feature>
<feature type="turn" evidence="37">
    <location>
        <begin position="375"/>
        <end position="377"/>
    </location>
</feature>
<feature type="helix" evidence="37">
    <location>
        <begin position="381"/>
        <end position="389"/>
    </location>
</feature>
<proteinExistence type="evidence at protein level"/>
<comment type="function">
    <text evidence="4 5 7 8 9 10 11 13 14 15 21 23 24 26 27 28 29">Stress-activated serine/threonine-protein kinase involved in cytokine production, endocytosis, reorganization of the cytoskeleton, cell migration, cell cycle control, chromatin remodeling, DNA damage response and transcriptional regulation. Following stress, it is phosphorylated and activated by MAP kinase p38-alpha/MAPK14, leading to phosphorylation of substrates. Phosphorylates serine in the peptide sequence, Hyd-X-R-X(2)-S, where Hyd is a large hydrophobic residue. Phosphorylates ALOX5, CDC25B, CDC25C, CEP131, ELAVL1, HNRNPA0, HSP27/HSPB1, KRT18, KRT20, LIMK1, LSP1, PABPC1, PARN, PDE4A, RCSD1, RPS6KA3, TAB3 and TTP/ZFP36. Phosphorylates HSF1; leading to the interaction with HSP90 proteins and inhibiting HSF1 homotrimerization, DNA-binding and transactivation activities (PubMed:16278218). Mediates phosphorylation of HSP27/HSPB1 in response to stress, leading to the dissociation of HSP27/HSPB1 from large small heat-shock protein (sHsps) oligomers and impairment of their chaperone activities and ability to protect against oxidative stress effectively. Involved in inflammatory response by regulating tumor necrosis factor (TNF) and IL6 production post-transcriptionally: acts by phosphorylating AU-rich elements (AREs)-binding proteins ELAVL1, HNRNPA0, PABPC1 and TTP/ZFP36, leading to the regulation of the stability and translation of TNF and IL6 mRNAs. Phosphorylation of TTP/ZFP36, a major post-transcriptional regulator of TNF, promotes its binding to 14-3-3 proteins and reduces its ARE mRNA affinity, leading to inhibition of dependent degradation of ARE-containing transcripts. Phosphorylates CEP131 in response to cellular stress induced by ultraviolet irradiation which promotes binding of CEP131 to 14-3-3 proteins and inhibits formation of novel centriolar satellites (PubMed:26616734). Also involved in late G2/M checkpoint following DNA damage through a process of post-transcriptional mRNA stabilization: following DNA damage, relocalizes from nucleus to cytoplasm and phosphorylates HNRNPA0 and PARN, leading to stabilization of GADD45A mRNA. Involved in toll-like receptor signaling pathway (TLR) in dendritic cells: required for acute TLR-induced macropinocytosis by phosphorylating and activating RPS6KA3.</text>
</comment>
<comment type="catalytic activity">
    <reaction evidence="6 29">
        <text>L-seryl-[protein] + ATP = O-phospho-L-seryl-[protein] + ADP + H(+)</text>
        <dbReference type="Rhea" id="RHEA:17989"/>
        <dbReference type="Rhea" id="RHEA-COMP:9863"/>
        <dbReference type="Rhea" id="RHEA-COMP:11604"/>
        <dbReference type="ChEBI" id="CHEBI:15378"/>
        <dbReference type="ChEBI" id="CHEBI:29999"/>
        <dbReference type="ChEBI" id="CHEBI:30616"/>
        <dbReference type="ChEBI" id="CHEBI:83421"/>
        <dbReference type="ChEBI" id="CHEBI:456216"/>
        <dbReference type="EC" id="2.7.11.1"/>
    </reaction>
</comment>
<comment type="catalytic activity">
    <reaction evidence="6 29">
        <text>L-threonyl-[protein] + ATP = O-phospho-L-threonyl-[protein] + ADP + H(+)</text>
        <dbReference type="Rhea" id="RHEA:46608"/>
        <dbReference type="Rhea" id="RHEA-COMP:11060"/>
        <dbReference type="Rhea" id="RHEA-COMP:11605"/>
        <dbReference type="ChEBI" id="CHEBI:15378"/>
        <dbReference type="ChEBI" id="CHEBI:30013"/>
        <dbReference type="ChEBI" id="CHEBI:30616"/>
        <dbReference type="ChEBI" id="CHEBI:61977"/>
        <dbReference type="ChEBI" id="CHEBI:456216"/>
        <dbReference type="EC" id="2.7.11.1"/>
    </reaction>
</comment>
<comment type="activity regulation">
    <text>Activated following phosphorylation by p38-alpha/MAPK14 following various stresses. Inhibited following sumoylation. Specifically inhibited by pyrrolopyridine inhibitors.</text>
</comment>
<comment type="subunit">
    <text evidence="6 12 14 16 18 19 20 22">Heterodimer with p38-alpha/MAPK14; this heterodimer forms a stable complex: molecules are positioned 'face to face' so that the ATP-binding sites of both kinases are at the heterodimer interface (PubMed:12171911, PubMed:17255097, PubMed:17395714, PubMed:17449059, PubMed:17480064, PubMed:17576063). Interacts with PHC2 (PubMed:15094067). Interacts with HSF1 (PubMed:16278218).</text>
</comment>
<comment type="interaction">
    <interactant intactId="EBI-993299">
        <id>P49137</id>
    </interactant>
    <interactant intactId="EBI-719620">
        <id>Q00613</id>
        <label>HSF1</label>
    </interactant>
    <organismsDiffer>false</organismsDiffer>
    <experiments>5</experiments>
</comment>
<comment type="interaction">
    <interactant intactId="EBI-993299">
        <id>P49137</id>
    </interactant>
    <interactant intactId="EBI-352682">
        <id>P04792</id>
        <label>HSPB1</label>
    </interactant>
    <organismsDiffer>false</organismsDiffer>
    <experiments>3</experiments>
</comment>
<comment type="interaction">
    <interactant intactId="EBI-993299">
        <id>P49137</id>
    </interactant>
    <interactant intactId="EBI-73946">
        <id>Q16539</id>
        <label>MAPK14</label>
    </interactant>
    <organismsDiffer>false</organismsDiffer>
    <experiments>15</experiments>
</comment>
<comment type="interaction">
    <interactant intactId="EBI-993299">
        <id>P49137</id>
    </interactant>
    <interactant intactId="EBI-642357">
        <id>Q9QWH1</id>
        <label>Phc2</label>
    </interactant>
    <organismsDiffer>true</organismsDiffer>
    <experiments>2</experiments>
</comment>
<comment type="interaction">
    <interactant intactId="EBI-15629963">
        <id>P49137-1</id>
    </interactant>
    <interactant intactId="EBI-298727">
        <id>P47811</id>
        <label>Mapk14</label>
    </interactant>
    <organismsDiffer>true</organismsDiffer>
    <experiments>2</experiments>
</comment>
<comment type="subcellular location">
    <subcellularLocation>
        <location evidence="24">Cytoplasm</location>
    </subcellularLocation>
    <subcellularLocation>
        <location evidence="24">Nucleus</location>
    </subcellularLocation>
    <text>Phosphorylation and subsequent activation releases the autoinhibitory helix, resulting in the export from the nucleus into the cytoplasm.</text>
</comment>
<comment type="alternative products">
    <event type="alternative splicing"/>
    <isoform>
        <id>P49137-1</id>
        <name>1</name>
        <sequence type="displayed"/>
    </isoform>
    <isoform>
        <id>P49137-2</id>
        <name>2</name>
        <sequence type="described" ref="VSP_004910"/>
    </isoform>
</comment>
<comment type="tissue specificity">
    <text>Expressed in all tissues examined.</text>
</comment>
<comment type="PTM">
    <text evidence="25">Sumoylation inhibits the protein kinase activity.</text>
</comment>
<comment type="PTM">
    <text evidence="30">Phosphorylated and activated by MAP kinase p38-alpha/MAPK14 at Thr-222, Ser-272 and Thr-334.</text>
</comment>
<comment type="miscellaneous">
    <molecule>Isoform 1</molecule>
    <text>Has a nuclear localization signal.</text>
</comment>
<comment type="similarity">
    <text evidence="32">Belongs to the protein kinase superfamily. CAMK Ser/Thr protein kinase family.</text>
</comment>
<comment type="online information" name="Atlas of Genetics and Cytogenetics in Oncology and Haematology">
    <link uri="https://atlasgeneticsoncology.org/gene/41295/MAPKAPK2"/>
</comment>
<protein>
    <recommendedName>
        <fullName>MAP kinase-activated protein kinase 2</fullName>
        <shortName>MAPK-activated protein kinase 2</shortName>
        <shortName>MAPKAP kinase 2</shortName>
        <shortName>MAPKAP-K2</shortName>
        <shortName>MAPKAPK-2</shortName>
        <shortName>MK-2</shortName>
        <shortName>MK2</shortName>
        <ecNumber>2.7.11.1</ecNumber>
    </recommendedName>
</protein>
<evidence type="ECO:0000250" key="1"/>
<evidence type="ECO:0000255" key="2">
    <source>
        <dbReference type="PROSITE-ProRule" id="PRU00159"/>
    </source>
</evidence>
<evidence type="ECO:0000256" key="3">
    <source>
        <dbReference type="SAM" id="MobiDB-lite"/>
    </source>
</evidence>
<evidence type="ECO:0000269" key="4">
    <source>
    </source>
</evidence>
<evidence type="ECO:0000269" key="5">
    <source>
    </source>
</evidence>
<evidence type="ECO:0000269" key="6">
    <source>
    </source>
</evidence>
<evidence type="ECO:0000269" key="7">
    <source>
    </source>
</evidence>
<evidence type="ECO:0000269" key="8">
    <source>
    </source>
</evidence>
<evidence type="ECO:0000269" key="9">
    <source>
    </source>
</evidence>
<evidence type="ECO:0000269" key="10">
    <source>
    </source>
</evidence>
<evidence type="ECO:0000269" key="11">
    <source>
    </source>
</evidence>
<evidence type="ECO:0000269" key="12">
    <source>
    </source>
</evidence>
<evidence type="ECO:0000269" key="13">
    <source>
    </source>
</evidence>
<evidence type="ECO:0000269" key="14">
    <source>
    </source>
</evidence>
<evidence type="ECO:0000269" key="15">
    <source>
    </source>
</evidence>
<evidence type="ECO:0000269" key="16">
    <source>
    </source>
</evidence>
<evidence type="ECO:0000269" key="17">
    <source>
    </source>
</evidence>
<evidence type="ECO:0000269" key="18">
    <source>
    </source>
</evidence>
<evidence type="ECO:0000269" key="19">
    <source>
    </source>
</evidence>
<evidence type="ECO:0000269" key="20">
    <source>
    </source>
</evidence>
<evidence type="ECO:0000269" key="21">
    <source>
    </source>
</evidence>
<evidence type="ECO:0000269" key="22">
    <source>
    </source>
</evidence>
<evidence type="ECO:0000269" key="23">
    <source>
    </source>
</evidence>
<evidence type="ECO:0000269" key="24">
    <source>
    </source>
</evidence>
<evidence type="ECO:0000269" key="25">
    <source>
    </source>
</evidence>
<evidence type="ECO:0000269" key="26">
    <source>
    </source>
</evidence>
<evidence type="ECO:0000269" key="27">
    <source>
    </source>
</evidence>
<evidence type="ECO:0000269" key="28">
    <source>
    </source>
</evidence>
<evidence type="ECO:0000269" key="29">
    <source>
    </source>
</evidence>
<evidence type="ECO:0000269" key="30">
    <source>
    </source>
</evidence>
<evidence type="ECO:0000303" key="31">
    <source>
    </source>
</evidence>
<evidence type="ECO:0000305" key="32"/>
<evidence type="ECO:0007744" key="33">
    <source>
    </source>
</evidence>
<evidence type="ECO:0007744" key="34">
    <source>
    </source>
</evidence>
<evidence type="ECO:0007829" key="35">
    <source>
        <dbReference type="PDB" id="1KWP"/>
    </source>
</evidence>
<evidence type="ECO:0007829" key="36">
    <source>
        <dbReference type="PDB" id="1NXK"/>
    </source>
</evidence>
<evidence type="ECO:0007829" key="37">
    <source>
        <dbReference type="PDB" id="2OKR"/>
    </source>
</evidence>
<evidence type="ECO:0007829" key="38">
    <source>
        <dbReference type="PDB" id="2OZA"/>
    </source>
</evidence>
<evidence type="ECO:0007829" key="39">
    <source>
        <dbReference type="PDB" id="3FYK"/>
    </source>
</evidence>
<evidence type="ECO:0007829" key="40">
    <source>
        <dbReference type="PDB" id="3M2W"/>
    </source>
</evidence>
<evidence type="ECO:0007829" key="41">
    <source>
        <dbReference type="PDB" id="3M42"/>
    </source>
</evidence>
<evidence type="ECO:0007829" key="42">
    <source>
        <dbReference type="PDB" id="3WI6"/>
    </source>
</evidence>
<evidence type="ECO:0007829" key="43">
    <source>
        <dbReference type="PDB" id="4TYH"/>
    </source>
</evidence>
<evidence type="ECO:0007829" key="44">
    <source>
        <dbReference type="PDB" id="6T8X"/>
    </source>
</evidence>
<dbReference type="EC" id="2.7.11.1"/>
<dbReference type="EMBL" id="U12779">
    <property type="protein sequence ID" value="AAA20851.1"/>
    <property type="molecule type" value="mRNA"/>
</dbReference>
<dbReference type="EMBL" id="AL591846">
    <property type="status" value="NOT_ANNOTATED_CDS"/>
    <property type="molecule type" value="Genomic_DNA"/>
</dbReference>
<dbReference type="EMBL" id="CH471100">
    <property type="protein sequence ID" value="EAW93526.1"/>
    <property type="molecule type" value="Genomic_DNA"/>
</dbReference>
<dbReference type="EMBL" id="CH471100">
    <property type="protein sequence ID" value="EAW93529.1"/>
    <property type="molecule type" value="Genomic_DNA"/>
</dbReference>
<dbReference type="EMBL" id="BC036060">
    <property type="protein sequence ID" value="AAH36060.2"/>
    <property type="molecule type" value="mRNA"/>
</dbReference>
<dbReference type="EMBL" id="BC052584">
    <property type="protein sequence ID" value="AAH52584.1"/>
    <property type="molecule type" value="mRNA"/>
</dbReference>
<dbReference type="EMBL" id="X75346">
    <property type="protein sequence ID" value="CAA53094.1"/>
    <property type="molecule type" value="mRNA"/>
</dbReference>
<dbReference type="CCDS" id="CCDS1466.1">
    <molecule id="P49137-2"/>
</dbReference>
<dbReference type="CCDS" id="CCDS31001.1">
    <molecule id="P49137-1"/>
</dbReference>
<dbReference type="PIR" id="JC2204">
    <property type="entry name" value="JC2204"/>
</dbReference>
<dbReference type="PIR" id="S39793">
    <property type="entry name" value="S39793"/>
</dbReference>
<dbReference type="RefSeq" id="NP_004750.1">
    <molecule id="P49137-2"/>
    <property type="nucleotide sequence ID" value="NM_004759.5"/>
</dbReference>
<dbReference type="RefSeq" id="NP_116584.2">
    <molecule id="P49137-1"/>
    <property type="nucleotide sequence ID" value="NM_032960.3"/>
</dbReference>
<dbReference type="PDB" id="1KWP">
    <property type="method" value="X-ray"/>
    <property type="resolution" value="2.80 A"/>
    <property type="chains" value="A/B=1-400"/>
</dbReference>
<dbReference type="PDB" id="1NXK">
    <property type="method" value="X-ray"/>
    <property type="resolution" value="2.70 A"/>
    <property type="chains" value="A/B/C/D=1-400"/>
</dbReference>
<dbReference type="PDB" id="1NY3">
    <property type="method" value="X-ray"/>
    <property type="resolution" value="3.00 A"/>
    <property type="chains" value="A=1-400"/>
</dbReference>
<dbReference type="PDB" id="2JBO">
    <property type="method" value="X-ray"/>
    <property type="resolution" value="3.10 A"/>
    <property type="chains" value="A=41-364"/>
</dbReference>
<dbReference type="PDB" id="2JBP">
    <property type="method" value="X-ray"/>
    <property type="resolution" value="3.31 A"/>
    <property type="chains" value="A/B/C/D/E/F/G/H/I/J/K/L=41-364"/>
</dbReference>
<dbReference type="PDB" id="2OKR">
    <property type="method" value="X-ray"/>
    <property type="resolution" value="2.00 A"/>
    <property type="chains" value="C/F=370-393"/>
</dbReference>
<dbReference type="PDB" id="2ONL">
    <property type="method" value="X-ray"/>
    <property type="resolution" value="4.00 A"/>
    <property type="chains" value="C/D=1-400"/>
</dbReference>
<dbReference type="PDB" id="2OZA">
    <property type="method" value="X-ray"/>
    <property type="resolution" value="2.70 A"/>
    <property type="chains" value="A=47-400"/>
</dbReference>
<dbReference type="PDB" id="2P3G">
    <property type="method" value="X-ray"/>
    <property type="resolution" value="3.80 A"/>
    <property type="chains" value="X=45-371"/>
</dbReference>
<dbReference type="PDB" id="2PZY">
    <property type="method" value="X-ray"/>
    <property type="resolution" value="2.90 A"/>
    <property type="chains" value="A/B/C/D=41-364"/>
</dbReference>
<dbReference type="PDB" id="3A2C">
    <property type="method" value="X-ray"/>
    <property type="resolution" value="2.90 A"/>
    <property type="chains" value="A/B/C/D/E/F/G/H/I/J/K/L=41-364"/>
</dbReference>
<dbReference type="PDB" id="3FPM">
    <property type="method" value="X-ray"/>
    <property type="resolution" value="3.30 A"/>
    <property type="chains" value="A=41-364"/>
</dbReference>
<dbReference type="PDB" id="3FYJ">
    <property type="method" value="X-ray"/>
    <property type="resolution" value="3.80 A"/>
    <property type="chains" value="X=45-371"/>
</dbReference>
<dbReference type="PDB" id="3FYK">
    <property type="method" value="X-ray"/>
    <property type="resolution" value="3.50 A"/>
    <property type="chains" value="X=45-371"/>
</dbReference>
<dbReference type="PDB" id="3GOK">
    <property type="method" value="X-ray"/>
    <property type="resolution" value="3.20 A"/>
    <property type="chains" value="A/B/C/D/E/F/G/H/I/J/K/L=41-364"/>
</dbReference>
<dbReference type="PDB" id="3KA0">
    <property type="method" value="X-ray"/>
    <property type="resolution" value="2.90 A"/>
    <property type="chains" value="A=47-366"/>
</dbReference>
<dbReference type="PDB" id="3KC3">
    <property type="method" value="X-ray"/>
    <property type="resolution" value="2.90 A"/>
    <property type="chains" value="A/B/C/D/E/F/G/H/I/J/K/L=41-364"/>
</dbReference>
<dbReference type="PDB" id="3KGA">
    <property type="method" value="X-ray"/>
    <property type="resolution" value="2.55 A"/>
    <property type="chains" value="A=47-364"/>
</dbReference>
<dbReference type="PDB" id="3M2W">
    <property type="method" value="X-ray"/>
    <property type="resolution" value="2.41 A"/>
    <property type="chains" value="A=47-364"/>
</dbReference>
<dbReference type="PDB" id="3M42">
    <property type="method" value="X-ray"/>
    <property type="resolution" value="2.68 A"/>
    <property type="chains" value="A=47-364"/>
</dbReference>
<dbReference type="PDB" id="3R2B">
    <property type="method" value="X-ray"/>
    <property type="resolution" value="2.90 A"/>
    <property type="chains" value="A/B/C/D/E/F/G/H/I/J/K/L=47-364"/>
</dbReference>
<dbReference type="PDB" id="3R2Y">
    <property type="method" value="X-ray"/>
    <property type="resolution" value="3.00 A"/>
    <property type="chains" value="A=46-364"/>
</dbReference>
<dbReference type="PDB" id="3R30">
    <property type="method" value="X-ray"/>
    <property type="resolution" value="3.20 A"/>
    <property type="chains" value="A=46-364"/>
</dbReference>
<dbReference type="PDB" id="3WI6">
    <property type="method" value="X-ray"/>
    <property type="resolution" value="2.99 A"/>
    <property type="chains" value="A/B/C/D/E/F=41-364"/>
</dbReference>
<dbReference type="PDB" id="4TYH">
    <property type="method" value="X-ray"/>
    <property type="resolution" value="3.00 A"/>
    <property type="chains" value="A=51-400"/>
</dbReference>
<dbReference type="PDB" id="6T8X">
    <property type="method" value="X-ray"/>
    <property type="resolution" value="2.81 A"/>
    <property type="chains" value="A/B/C/D/E/F=41-338"/>
</dbReference>
<dbReference type="PDB" id="6TCA">
    <property type="method" value="X-ray"/>
    <property type="resolution" value="3.70 A"/>
    <property type="chains" value="A/C/E/G=41-400"/>
</dbReference>
<dbReference type="PDB" id="7NRY">
    <property type="method" value="X-ray"/>
    <property type="resolution" value="3.80 A"/>
    <property type="chains" value="X=45-371"/>
</dbReference>
<dbReference type="PDB" id="8XU4">
    <property type="method" value="X-ray"/>
    <property type="resolution" value="3.40 A"/>
    <property type="chains" value="A/B/C/D/E/F/G/H/I/J/K/L=47-364"/>
</dbReference>
<dbReference type="PDB" id="8XX1">
    <property type="method" value="X-ray"/>
    <property type="resolution" value="2.55 A"/>
    <property type="chains" value="A=47-364"/>
</dbReference>
<dbReference type="PDBsum" id="1KWP"/>
<dbReference type="PDBsum" id="1NXK"/>
<dbReference type="PDBsum" id="1NY3"/>
<dbReference type="PDBsum" id="2JBO"/>
<dbReference type="PDBsum" id="2JBP"/>
<dbReference type="PDBsum" id="2OKR"/>
<dbReference type="PDBsum" id="2ONL"/>
<dbReference type="PDBsum" id="2OZA"/>
<dbReference type="PDBsum" id="2P3G"/>
<dbReference type="PDBsum" id="2PZY"/>
<dbReference type="PDBsum" id="3A2C"/>
<dbReference type="PDBsum" id="3FPM"/>
<dbReference type="PDBsum" id="3FYJ"/>
<dbReference type="PDBsum" id="3FYK"/>
<dbReference type="PDBsum" id="3GOK"/>
<dbReference type="PDBsum" id="3KA0"/>
<dbReference type="PDBsum" id="3KC3"/>
<dbReference type="PDBsum" id="3KGA"/>
<dbReference type="PDBsum" id="3M2W"/>
<dbReference type="PDBsum" id="3M42"/>
<dbReference type="PDBsum" id="3R2B"/>
<dbReference type="PDBsum" id="3R2Y"/>
<dbReference type="PDBsum" id="3R30"/>
<dbReference type="PDBsum" id="3WI6"/>
<dbReference type="PDBsum" id="4TYH"/>
<dbReference type="PDBsum" id="6T8X"/>
<dbReference type="PDBsum" id="6TCA"/>
<dbReference type="PDBsum" id="7NRY"/>
<dbReference type="PDBsum" id="8XU4"/>
<dbReference type="PDBsum" id="8XX1"/>
<dbReference type="BMRB" id="P49137"/>
<dbReference type="SMR" id="P49137"/>
<dbReference type="BioGRID" id="114683">
    <property type="interactions" value="134"/>
</dbReference>
<dbReference type="CORUM" id="P49137"/>
<dbReference type="DIP" id="DIP-35671N"/>
<dbReference type="ELM" id="P49137"/>
<dbReference type="FunCoup" id="P49137">
    <property type="interactions" value="2396"/>
</dbReference>
<dbReference type="IntAct" id="P49137">
    <property type="interactions" value="67"/>
</dbReference>
<dbReference type="MINT" id="P49137"/>
<dbReference type="STRING" id="9606.ENSP00000356070"/>
<dbReference type="BindingDB" id="P49137"/>
<dbReference type="ChEMBL" id="CHEMBL2208"/>
<dbReference type="DrugBank" id="DB07430">
    <property type="generic name" value="(10R)-10-methyl-3-(6-methylpyridin-3-yl)-9,10,11,12-tetrahydro-8H-[1,4]diazepino[5',6':4,5]thieno[3,2-f]quinolin-8-one"/>
</dbReference>
<dbReference type="DrugBank" id="DB07431">
    <property type="generic name" value="(3R)-3-(aminomethyl)-9-methoxy-1,2,3,4-tetrahydro-5H-[1]benzothieno[3,2-e][1,4]diazepin-5-one"/>
</dbReference>
<dbReference type="DrugBank" id="DB07406">
    <property type="generic name" value="(4R)-N-[4-({[2-(DIMETHYLAMINO)ETHYL]AMINO}CARBONYL)-1,3-THIAZOL-2-YL]-4-METHYL-1-OXO-2,3,4,9-TETRAHYDRO-1H-BETA-CARBOLINE-6-CARBOXAMIDE"/>
</dbReference>
<dbReference type="DrugBank" id="DB08358">
    <property type="generic name" value="2-(2-QUINOLIN-3-YLPYRIDIN-4-YL)-1,5,6,7-TETRAHYDRO-4H-PYRROLO[3,2-C]PYRIDIN-4-ONE"/>
</dbReference>
<dbReference type="DrugBank" id="DB07728">
    <property type="generic name" value="2-[2-(2-FLUOROPHENYL)PYRIDIN-4-YL]-1,5,6,7-TETRAHYDRO-4H-PYRROLO[3,2-C]PYRIDIN-4-ONE"/>
</dbReference>
<dbReference type="DrugBank" id="DB07234">
    <property type="generic name" value="3-{[(1R)-1-phenylethyl]amino}-4-(pyridin-4-ylamino)cyclobut-3-ene-1,2-dione"/>
</dbReference>
<dbReference type="DrugBank" id="DB17277">
    <property type="generic name" value="CBP-501"/>
</dbReference>
<dbReference type="DrugBank" id="DB02010">
    <property type="generic name" value="Staurosporine"/>
</dbReference>
<dbReference type="DrugBank" id="DB16502">
    <property type="generic name" value="Zunsemetinib"/>
</dbReference>
<dbReference type="DrugCentral" id="P49137"/>
<dbReference type="GuidetoPHARMACOLOGY" id="2094"/>
<dbReference type="GlyGen" id="P49137">
    <property type="glycosylation" value="1 site"/>
</dbReference>
<dbReference type="iPTMnet" id="P49137"/>
<dbReference type="PhosphoSitePlus" id="P49137"/>
<dbReference type="SwissPalm" id="P49137"/>
<dbReference type="BioMuta" id="MAPKAPK2"/>
<dbReference type="DMDM" id="1346538"/>
<dbReference type="jPOST" id="P49137"/>
<dbReference type="MassIVE" id="P49137"/>
<dbReference type="PaxDb" id="9606-ENSP00000356070"/>
<dbReference type="PeptideAtlas" id="P49137"/>
<dbReference type="ProteomicsDB" id="55964">
    <molecule id="P49137-1"/>
</dbReference>
<dbReference type="ProteomicsDB" id="55965">
    <molecule id="P49137-2"/>
</dbReference>
<dbReference type="Pumba" id="P49137"/>
<dbReference type="Antibodypedia" id="4144">
    <property type="antibodies" value="975 antibodies from 47 providers"/>
</dbReference>
<dbReference type="DNASU" id="9261"/>
<dbReference type="Ensembl" id="ENST00000294981.8">
    <molecule id="P49137-2"/>
    <property type="protein sequence ID" value="ENSP00000294981.4"/>
    <property type="gene ID" value="ENSG00000162889.11"/>
</dbReference>
<dbReference type="Ensembl" id="ENST00000367103.4">
    <molecule id="P49137-1"/>
    <property type="protein sequence ID" value="ENSP00000356070.4"/>
    <property type="gene ID" value="ENSG00000162889.11"/>
</dbReference>
<dbReference type="GeneID" id="9261"/>
<dbReference type="KEGG" id="hsa:9261"/>
<dbReference type="MANE-Select" id="ENST00000367103.4">
    <property type="protein sequence ID" value="ENSP00000356070.4"/>
    <property type="RefSeq nucleotide sequence ID" value="NM_032960.4"/>
    <property type="RefSeq protein sequence ID" value="NP_116584.2"/>
</dbReference>
<dbReference type="UCSC" id="uc001hel.3">
    <molecule id="P49137-1"/>
    <property type="organism name" value="human"/>
</dbReference>
<dbReference type="AGR" id="HGNC:6887"/>
<dbReference type="CTD" id="9261"/>
<dbReference type="DisGeNET" id="9261"/>
<dbReference type="GeneCards" id="MAPKAPK2"/>
<dbReference type="HGNC" id="HGNC:6887">
    <property type="gene designation" value="MAPKAPK2"/>
</dbReference>
<dbReference type="HPA" id="ENSG00000162889">
    <property type="expression patterns" value="Low tissue specificity"/>
</dbReference>
<dbReference type="MIM" id="602006">
    <property type="type" value="gene"/>
</dbReference>
<dbReference type="neXtProt" id="NX_P49137"/>
<dbReference type="OpenTargets" id="ENSG00000162889"/>
<dbReference type="PharmGKB" id="PA30631"/>
<dbReference type="VEuPathDB" id="HostDB:ENSG00000162889"/>
<dbReference type="eggNOG" id="KOG0604">
    <property type="taxonomic scope" value="Eukaryota"/>
</dbReference>
<dbReference type="GeneTree" id="ENSGT00940000157261"/>
<dbReference type="HOGENOM" id="CLU_000288_63_0_1"/>
<dbReference type="InParanoid" id="P49137"/>
<dbReference type="OMA" id="ICHIVSY"/>
<dbReference type="OrthoDB" id="40902at2759"/>
<dbReference type="PAN-GO" id="P49137">
    <property type="GO annotations" value="14 GO annotations based on evolutionary models"/>
</dbReference>
<dbReference type="PhylomeDB" id="P49137"/>
<dbReference type="TreeFam" id="TF312891"/>
<dbReference type="BioCyc" id="MetaCyc:HS08751-MONOMER"/>
<dbReference type="BRENDA" id="2.7.11.1">
    <property type="organism ID" value="2681"/>
</dbReference>
<dbReference type="PathwayCommons" id="P49137"/>
<dbReference type="Reactome" id="R-HSA-171007">
    <property type="pathway name" value="p38MAPK events"/>
</dbReference>
<dbReference type="Reactome" id="R-HSA-199920">
    <property type="pathway name" value="CREB phosphorylation"/>
</dbReference>
<dbReference type="Reactome" id="R-HSA-2142691">
    <property type="pathway name" value="Synthesis of Leukotrienes (LT) and Eoxins (EX)"/>
</dbReference>
<dbReference type="Reactome" id="R-HSA-2559580">
    <property type="pathway name" value="Oxidative Stress Induced Senescence"/>
</dbReference>
<dbReference type="Reactome" id="R-HSA-3371453">
    <property type="pathway name" value="Regulation of HSF1-mediated heat shock response"/>
</dbReference>
<dbReference type="Reactome" id="R-HSA-4420097">
    <property type="pathway name" value="VEGFA-VEGFR2 Pathway"/>
</dbReference>
<dbReference type="Reactome" id="R-HSA-450302">
    <property type="pathway name" value="activated TAK1 mediates p38 MAPK activation"/>
</dbReference>
<dbReference type="Reactome" id="R-HSA-450385">
    <property type="pathway name" value="Butyrate Response Factor 1 (BRF1) binds and destabilizes mRNA"/>
</dbReference>
<dbReference type="Reactome" id="R-HSA-450513">
    <property type="pathway name" value="Tristetraprolin (TTP, ZFP36) binds and destabilizes mRNA"/>
</dbReference>
<dbReference type="Reactome" id="R-HSA-5357905">
    <property type="pathway name" value="Regulation of TNFR1 signaling"/>
</dbReference>
<dbReference type="SignaLink" id="P49137"/>
<dbReference type="SIGNOR" id="P49137"/>
<dbReference type="BioGRID-ORCS" id="9261">
    <property type="hits" value="20 hits in 1197 CRISPR screens"/>
</dbReference>
<dbReference type="ChiTaRS" id="MAPKAPK2">
    <property type="organism name" value="human"/>
</dbReference>
<dbReference type="EvolutionaryTrace" id="P49137"/>
<dbReference type="GeneWiki" id="MAPKAPK2"/>
<dbReference type="GenomeRNAi" id="9261"/>
<dbReference type="Pharos" id="P49137">
    <property type="development level" value="Tchem"/>
</dbReference>
<dbReference type="PRO" id="PR:P49137"/>
<dbReference type="Proteomes" id="UP000005640">
    <property type="component" value="Chromosome 1"/>
</dbReference>
<dbReference type="RNAct" id="P49137">
    <property type="molecule type" value="protein"/>
</dbReference>
<dbReference type="Bgee" id="ENSG00000162889">
    <property type="expression patterns" value="Expressed in apex of heart and 202 other cell types or tissues"/>
</dbReference>
<dbReference type="GO" id="GO:0005813">
    <property type="term" value="C:centrosome"/>
    <property type="evidence" value="ECO:0000314"/>
    <property type="project" value="HPA"/>
</dbReference>
<dbReference type="GO" id="GO:0036064">
    <property type="term" value="C:ciliary basal body"/>
    <property type="evidence" value="ECO:0000314"/>
    <property type="project" value="HPA"/>
</dbReference>
<dbReference type="GO" id="GO:0005737">
    <property type="term" value="C:cytoplasm"/>
    <property type="evidence" value="ECO:0000314"/>
    <property type="project" value="UniProtKB"/>
</dbReference>
<dbReference type="GO" id="GO:0005829">
    <property type="term" value="C:cytosol"/>
    <property type="evidence" value="ECO:0000314"/>
    <property type="project" value="HPA"/>
</dbReference>
<dbReference type="GO" id="GO:0070062">
    <property type="term" value="C:extracellular exosome"/>
    <property type="evidence" value="ECO:0007005"/>
    <property type="project" value="UniProtKB"/>
</dbReference>
<dbReference type="GO" id="GO:0005654">
    <property type="term" value="C:nucleoplasm"/>
    <property type="evidence" value="ECO:0000314"/>
    <property type="project" value="HPA"/>
</dbReference>
<dbReference type="GO" id="GO:0005634">
    <property type="term" value="C:nucleus"/>
    <property type="evidence" value="ECO:0000314"/>
    <property type="project" value="UniProtKB"/>
</dbReference>
<dbReference type="GO" id="GO:0005524">
    <property type="term" value="F:ATP binding"/>
    <property type="evidence" value="ECO:0007669"/>
    <property type="project" value="UniProtKB-KW"/>
</dbReference>
<dbReference type="GO" id="GO:0009931">
    <property type="term" value="F:calcium-dependent protein serine/threonine kinase activity"/>
    <property type="evidence" value="ECO:0000318"/>
    <property type="project" value="GO_Central"/>
</dbReference>
<dbReference type="GO" id="GO:0004683">
    <property type="term" value="F:calcium/calmodulin-dependent protein kinase activity"/>
    <property type="evidence" value="ECO:0000318"/>
    <property type="project" value="GO_Central"/>
</dbReference>
<dbReference type="GO" id="GO:0005516">
    <property type="term" value="F:calmodulin binding"/>
    <property type="evidence" value="ECO:0000318"/>
    <property type="project" value="GO_Central"/>
</dbReference>
<dbReference type="GO" id="GO:0051019">
    <property type="term" value="F:mitogen-activated protein kinase binding"/>
    <property type="evidence" value="ECO:0000318"/>
    <property type="project" value="GO_Central"/>
</dbReference>
<dbReference type="GO" id="GO:0004672">
    <property type="term" value="F:protein kinase activity"/>
    <property type="evidence" value="ECO:0000304"/>
    <property type="project" value="ProtInc"/>
</dbReference>
<dbReference type="GO" id="GO:0106310">
    <property type="term" value="F:protein serine kinase activity"/>
    <property type="evidence" value="ECO:0007669"/>
    <property type="project" value="RHEA"/>
</dbReference>
<dbReference type="GO" id="GO:0004674">
    <property type="term" value="F:protein serine/threonine kinase activity"/>
    <property type="evidence" value="ECO:0000314"/>
    <property type="project" value="UniProtKB"/>
</dbReference>
<dbReference type="GO" id="GO:0070935">
    <property type="term" value="P:3'-UTR-mediated mRNA stabilization"/>
    <property type="evidence" value="ECO:0000314"/>
    <property type="project" value="UniProtKB"/>
</dbReference>
<dbReference type="GO" id="GO:0035924">
    <property type="term" value="P:cellular response to vascular endothelial growth factor stimulus"/>
    <property type="evidence" value="ECO:0000315"/>
    <property type="project" value="BHF-UCL"/>
</dbReference>
<dbReference type="GO" id="GO:0006974">
    <property type="term" value="P:DNA damage response"/>
    <property type="evidence" value="ECO:0000315"/>
    <property type="project" value="UniProtKB"/>
</dbReference>
<dbReference type="GO" id="GO:0006954">
    <property type="term" value="P:inflammatory response"/>
    <property type="evidence" value="ECO:0000250"/>
    <property type="project" value="UniProtKB"/>
</dbReference>
<dbReference type="GO" id="GO:0048839">
    <property type="term" value="P:inner ear development"/>
    <property type="evidence" value="ECO:0007669"/>
    <property type="project" value="Ensembl"/>
</dbReference>
<dbReference type="GO" id="GO:0035556">
    <property type="term" value="P:intracellular signal transduction"/>
    <property type="evidence" value="ECO:0000318"/>
    <property type="project" value="GO_Central"/>
</dbReference>
<dbReference type="GO" id="GO:0006691">
    <property type="term" value="P:leukotriene metabolic process"/>
    <property type="evidence" value="ECO:0000304"/>
    <property type="project" value="Reactome"/>
</dbReference>
<dbReference type="GO" id="GO:0044351">
    <property type="term" value="P:macropinocytosis"/>
    <property type="evidence" value="ECO:0000250"/>
    <property type="project" value="UniProtKB"/>
</dbReference>
<dbReference type="GO" id="GO:0000165">
    <property type="term" value="P:MAPK cascade"/>
    <property type="evidence" value="ECO:0000314"/>
    <property type="project" value="BHF-UCL"/>
</dbReference>
<dbReference type="GO" id="GO:0038066">
    <property type="term" value="P:p38MAPK cascade"/>
    <property type="evidence" value="ECO:0007669"/>
    <property type="project" value="Ensembl"/>
</dbReference>
<dbReference type="GO" id="GO:0060907">
    <property type="term" value="P:positive regulation of macrophage cytokine production"/>
    <property type="evidence" value="ECO:0007669"/>
    <property type="project" value="Ensembl"/>
</dbReference>
<dbReference type="GO" id="GO:0032760">
    <property type="term" value="P:positive regulation of tumor necrosis factor production"/>
    <property type="evidence" value="ECO:0007669"/>
    <property type="project" value="Ensembl"/>
</dbReference>
<dbReference type="GO" id="GO:1900034">
    <property type="term" value="P:regulation of cellular response to heat"/>
    <property type="evidence" value="ECO:0000304"/>
    <property type="project" value="Reactome"/>
</dbReference>
<dbReference type="GO" id="GO:0032675">
    <property type="term" value="P:regulation of interleukin-6 production"/>
    <property type="evidence" value="ECO:0000250"/>
    <property type="project" value="UniProtKB"/>
</dbReference>
<dbReference type="GO" id="GO:0043488">
    <property type="term" value="P:regulation of mRNA stability"/>
    <property type="evidence" value="ECO:0000304"/>
    <property type="project" value="Reactome"/>
</dbReference>
<dbReference type="GO" id="GO:0032680">
    <property type="term" value="P:regulation of tumor necrosis factor production"/>
    <property type="evidence" value="ECO:0000314"/>
    <property type="project" value="UniProtKB"/>
</dbReference>
<dbReference type="GO" id="GO:0010803">
    <property type="term" value="P:regulation of tumor necrosis factor-mediated signaling pathway"/>
    <property type="evidence" value="ECO:0000304"/>
    <property type="project" value="Reactome"/>
</dbReference>
<dbReference type="GO" id="GO:0034097">
    <property type="term" value="P:response to cytokine"/>
    <property type="evidence" value="ECO:0000314"/>
    <property type="project" value="UniProtKB"/>
</dbReference>
<dbReference type="GO" id="GO:0032496">
    <property type="term" value="P:response to lipopolysaccharide"/>
    <property type="evidence" value="ECO:0000250"/>
    <property type="project" value="UniProtKB"/>
</dbReference>
<dbReference type="GO" id="GO:0002224">
    <property type="term" value="P:toll-like receptor signaling pathway"/>
    <property type="evidence" value="ECO:0000250"/>
    <property type="project" value="UniProtKB"/>
</dbReference>
<dbReference type="GO" id="GO:0048010">
    <property type="term" value="P:vascular endothelial growth factor receptor signaling pathway"/>
    <property type="evidence" value="ECO:0000315"/>
    <property type="project" value="BHF-UCL"/>
</dbReference>
<dbReference type="CDD" id="cd14170">
    <property type="entry name" value="STKc_MAPKAPK2"/>
    <property type="match status" value="1"/>
</dbReference>
<dbReference type="FunFam" id="1.10.510.10:FF:000094">
    <property type="entry name" value="MAP kinase-activated protein kinase 2"/>
    <property type="match status" value="1"/>
</dbReference>
<dbReference type="FunFam" id="3.30.200.20:FF:000156">
    <property type="entry name" value="MAP kinase-activated protein kinase 3"/>
    <property type="match status" value="1"/>
</dbReference>
<dbReference type="FunFam" id="4.10.1170.10:FF:000001">
    <property type="entry name" value="MAP kinase-activated protein kinase 3"/>
    <property type="match status" value="1"/>
</dbReference>
<dbReference type="Gene3D" id="4.10.1170.10">
    <property type="entry name" value="MAP kinase activated protein kinase 2"/>
    <property type="match status" value="1"/>
</dbReference>
<dbReference type="Gene3D" id="3.30.200.20">
    <property type="entry name" value="Phosphorylase Kinase, domain 1"/>
    <property type="match status" value="1"/>
</dbReference>
<dbReference type="Gene3D" id="1.10.510.10">
    <property type="entry name" value="Transferase(Phosphotransferase) domain 1"/>
    <property type="match status" value="1"/>
</dbReference>
<dbReference type="IDEAL" id="IID00271"/>
<dbReference type="InterPro" id="IPR011009">
    <property type="entry name" value="Kinase-like_dom_sf"/>
</dbReference>
<dbReference type="InterPro" id="IPR027442">
    <property type="entry name" value="MAPKAPK_C"/>
</dbReference>
<dbReference type="InterPro" id="IPR000719">
    <property type="entry name" value="Prot_kinase_dom"/>
</dbReference>
<dbReference type="InterPro" id="IPR017441">
    <property type="entry name" value="Protein_kinase_ATP_BS"/>
</dbReference>
<dbReference type="InterPro" id="IPR008271">
    <property type="entry name" value="Ser/Thr_kinase_AS"/>
</dbReference>
<dbReference type="PANTHER" id="PTHR24347">
    <property type="entry name" value="SERINE/THREONINE-PROTEIN KINASE"/>
    <property type="match status" value="1"/>
</dbReference>
<dbReference type="Pfam" id="PF00069">
    <property type="entry name" value="Pkinase"/>
    <property type="match status" value="1"/>
</dbReference>
<dbReference type="SMART" id="SM00220">
    <property type="entry name" value="S_TKc"/>
    <property type="match status" value="1"/>
</dbReference>
<dbReference type="SUPFAM" id="SSF56112">
    <property type="entry name" value="Protein kinase-like (PK-like)"/>
    <property type="match status" value="1"/>
</dbReference>
<dbReference type="PROSITE" id="PS00107">
    <property type="entry name" value="PROTEIN_KINASE_ATP"/>
    <property type="match status" value="1"/>
</dbReference>
<dbReference type="PROSITE" id="PS50011">
    <property type="entry name" value="PROTEIN_KINASE_DOM"/>
    <property type="match status" value="1"/>
</dbReference>
<dbReference type="PROSITE" id="PS00108">
    <property type="entry name" value="PROTEIN_KINASE_ST"/>
    <property type="match status" value="1"/>
</dbReference>
<accession>P49137</accession>
<accession>Q5SY30</accession>
<accession>Q5SY41</accession>
<accession>Q8IYD6</accession>
<organism>
    <name type="scientific">Homo sapiens</name>
    <name type="common">Human</name>
    <dbReference type="NCBI Taxonomy" id="9606"/>
    <lineage>
        <taxon>Eukaryota</taxon>
        <taxon>Metazoa</taxon>
        <taxon>Chordata</taxon>
        <taxon>Craniata</taxon>
        <taxon>Vertebrata</taxon>
        <taxon>Euteleostomi</taxon>
        <taxon>Mammalia</taxon>
        <taxon>Eutheria</taxon>
        <taxon>Euarchontoglires</taxon>
        <taxon>Primates</taxon>
        <taxon>Haplorrhini</taxon>
        <taxon>Catarrhini</taxon>
        <taxon>Hominidae</taxon>
        <taxon>Homo</taxon>
    </lineage>
</organism>
<reference key="1">
    <citation type="journal article" date="1994" name="Biochem. Biophys. Res. Commun.">
        <title>The primary structure of a human MAP kinase activated protein kinase 2.</title>
        <authorList>
            <person name="Zu Y.-L."/>
            <person name="Wu F."/>
            <person name="Gilchrist A."/>
            <person name="Ai Y."/>
            <person name="Labadia M.E."/>
            <person name="Huang C.K."/>
        </authorList>
    </citation>
    <scope>NUCLEOTIDE SEQUENCE [MRNA] (ISOFORM 2)</scope>
</reference>
<reference key="2">
    <citation type="journal article" date="2006" name="Nature">
        <title>The DNA sequence and biological annotation of human chromosome 1.</title>
        <authorList>
            <person name="Gregory S.G."/>
            <person name="Barlow K.F."/>
            <person name="McLay K.E."/>
            <person name="Kaul R."/>
            <person name="Swarbreck D."/>
            <person name="Dunham A."/>
            <person name="Scott C.E."/>
            <person name="Howe K.L."/>
            <person name="Woodfine K."/>
            <person name="Spencer C.C.A."/>
            <person name="Jones M.C."/>
            <person name="Gillson C."/>
            <person name="Searle S."/>
            <person name="Zhou Y."/>
            <person name="Kokocinski F."/>
            <person name="McDonald L."/>
            <person name="Evans R."/>
            <person name="Phillips K."/>
            <person name="Atkinson A."/>
            <person name="Cooper R."/>
            <person name="Jones C."/>
            <person name="Hall R.E."/>
            <person name="Andrews T.D."/>
            <person name="Lloyd C."/>
            <person name="Ainscough R."/>
            <person name="Almeida J.P."/>
            <person name="Ambrose K.D."/>
            <person name="Anderson F."/>
            <person name="Andrew R.W."/>
            <person name="Ashwell R.I.S."/>
            <person name="Aubin K."/>
            <person name="Babbage A.K."/>
            <person name="Bagguley C.L."/>
            <person name="Bailey J."/>
            <person name="Beasley H."/>
            <person name="Bethel G."/>
            <person name="Bird C.P."/>
            <person name="Bray-Allen S."/>
            <person name="Brown J.Y."/>
            <person name="Brown A.J."/>
            <person name="Buckley D."/>
            <person name="Burton J."/>
            <person name="Bye J."/>
            <person name="Carder C."/>
            <person name="Chapman J.C."/>
            <person name="Clark S.Y."/>
            <person name="Clarke G."/>
            <person name="Clee C."/>
            <person name="Cobley V."/>
            <person name="Collier R.E."/>
            <person name="Corby N."/>
            <person name="Coville G.J."/>
            <person name="Davies J."/>
            <person name="Deadman R."/>
            <person name="Dunn M."/>
            <person name="Earthrowl M."/>
            <person name="Ellington A.G."/>
            <person name="Errington H."/>
            <person name="Frankish A."/>
            <person name="Frankland J."/>
            <person name="French L."/>
            <person name="Garner P."/>
            <person name="Garnett J."/>
            <person name="Gay L."/>
            <person name="Ghori M.R.J."/>
            <person name="Gibson R."/>
            <person name="Gilby L.M."/>
            <person name="Gillett W."/>
            <person name="Glithero R.J."/>
            <person name="Grafham D.V."/>
            <person name="Griffiths C."/>
            <person name="Griffiths-Jones S."/>
            <person name="Grocock R."/>
            <person name="Hammond S."/>
            <person name="Harrison E.S.I."/>
            <person name="Hart E."/>
            <person name="Haugen E."/>
            <person name="Heath P.D."/>
            <person name="Holmes S."/>
            <person name="Holt K."/>
            <person name="Howden P.J."/>
            <person name="Hunt A.R."/>
            <person name="Hunt S.E."/>
            <person name="Hunter G."/>
            <person name="Isherwood J."/>
            <person name="James R."/>
            <person name="Johnson C."/>
            <person name="Johnson D."/>
            <person name="Joy A."/>
            <person name="Kay M."/>
            <person name="Kershaw J.K."/>
            <person name="Kibukawa M."/>
            <person name="Kimberley A.M."/>
            <person name="King A."/>
            <person name="Knights A.J."/>
            <person name="Lad H."/>
            <person name="Laird G."/>
            <person name="Lawlor S."/>
            <person name="Leongamornlert D.A."/>
            <person name="Lloyd D.M."/>
            <person name="Loveland J."/>
            <person name="Lovell J."/>
            <person name="Lush M.J."/>
            <person name="Lyne R."/>
            <person name="Martin S."/>
            <person name="Mashreghi-Mohammadi M."/>
            <person name="Matthews L."/>
            <person name="Matthews N.S.W."/>
            <person name="McLaren S."/>
            <person name="Milne S."/>
            <person name="Mistry S."/>
            <person name="Moore M.J.F."/>
            <person name="Nickerson T."/>
            <person name="O'Dell C.N."/>
            <person name="Oliver K."/>
            <person name="Palmeiri A."/>
            <person name="Palmer S.A."/>
            <person name="Parker A."/>
            <person name="Patel D."/>
            <person name="Pearce A.V."/>
            <person name="Peck A.I."/>
            <person name="Pelan S."/>
            <person name="Phelps K."/>
            <person name="Phillimore B.J."/>
            <person name="Plumb R."/>
            <person name="Rajan J."/>
            <person name="Raymond C."/>
            <person name="Rouse G."/>
            <person name="Saenphimmachak C."/>
            <person name="Sehra H.K."/>
            <person name="Sheridan E."/>
            <person name="Shownkeen R."/>
            <person name="Sims S."/>
            <person name="Skuce C.D."/>
            <person name="Smith M."/>
            <person name="Steward C."/>
            <person name="Subramanian S."/>
            <person name="Sycamore N."/>
            <person name="Tracey A."/>
            <person name="Tromans A."/>
            <person name="Van Helmond Z."/>
            <person name="Wall M."/>
            <person name="Wallis J.M."/>
            <person name="White S."/>
            <person name="Whitehead S.L."/>
            <person name="Wilkinson J.E."/>
            <person name="Willey D.L."/>
            <person name="Williams H."/>
            <person name="Wilming L."/>
            <person name="Wray P.W."/>
            <person name="Wu Z."/>
            <person name="Coulson A."/>
            <person name="Vaudin M."/>
            <person name="Sulston J.E."/>
            <person name="Durbin R.M."/>
            <person name="Hubbard T."/>
            <person name="Wooster R."/>
            <person name="Dunham I."/>
            <person name="Carter N.P."/>
            <person name="McVean G."/>
            <person name="Ross M.T."/>
            <person name="Harrow J."/>
            <person name="Olson M.V."/>
            <person name="Beck S."/>
            <person name="Rogers J."/>
            <person name="Bentley D.R."/>
        </authorList>
    </citation>
    <scope>NUCLEOTIDE SEQUENCE [LARGE SCALE GENOMIC DNA]</scope>
</reference>
<reference key="3">
    <citation type="submission" date="2005-09" db="EMBL/GenBank/DDBJ databases">
        <authorList>
            <person name="Mural R.J."/>
            <person name="Istrail S."/>
            <person name="Sutton G.G."/>
            <person name="Florea L."/>
            <person name="Halpern A.L."/>
            <person name="Mobarry C.M."/>
            <person name="Lippert R."/>
            <person name="Walenz B."/>
            <person name="Shatkay H."/>
            <person name="Dew I."/>
            <person name="Miller J.R."/>
            <person name="Flanigan M.J."/>
            <person name="Edwards N.J."/>
            <person name="Bolanos R."/>
            <person name="Fasulo D."/>
            <person name="Halldorsson B.V."/>
            <person name="Hannenhalli S."/>
            <person name="Turner R."/>
            <person name="Yooseph S."/>
            <person name="Lu F."/>
            <person name="Nusskern D.R."/>
            <person name="Shue B.C."/>
            <person name="Zheng X.H."/>
            <person name="Zhong F."/>
            <person name="Delcher A.L."/>
            <person name="Huson D.H."/>
            <person name="Kravitz S.A."/>
            <person name="Mouchard L."/>
            <person name="Reinert K."/>
            <person name="Remington K.A."/>
            <person name="Clark A.G."/>
            <person name="Waterman M.S."/>
            <person name="Eichler E.E."/>
            <person name="Adams M.D."/>
            <person name="Hunkapiller M.W."/>
            <person name="Myers E.W."/>
            <person name="Venter J.C."/>
        </authorList>
    </citation>
    <scope>NUCLEOTIDE SEQUENCE [LARGE SCALE GENOMIC DNA]</scope>
</reference>
<reference key="4">
    <citation type="journal article" date="2004" name="Genome Res.">
        <title>The status, quality, and expansion of the NIH full-length cDNA project: the Mammalian Gene Collection (MGC).</title>
        <authorList>
            <consortium name="The MGC Project Team"/>
        </authorList>
    </citation>
    <scope>NUCLEOTIDE SEQUENCE [LARGE SCALE MRNA] (ISOFORM 1)</scope>
    <source>
        <tissue>Skin</tissue>
        <tissue>Testis</tissue>
    </source>
</reference>
<reference key="5">
    <citation type="journal article" date="1993" name="Biochem. J.">
        <title>The substrate specificity and structure of mitogen-activated protein (MAP) kinase-activated protein kinase-2.</title>
        <authorList>
            <person name="Stokoe D."/>
            <person name="Caudwell B."/>
            <person name="Cohen P.T.W."/>
            <person name="Cohen P."/>
        </authorList>
    </citation>
    <scope>NUCLEOTIDE SEQUENCE [MRNA] OF 5-400 (ISOFORM 1)</scope>
    <scope>FUNCTION</scope>
</reference>
<reference key="6">
    <citation type="journal article" date="1993" name="J. Biol. Chem.">
        <title>Small heat shock proteins are molecular chaperones.</title>
        <authorList>
            <person name="Jakob U."/>
            <person name="Gaestel M."/>
            <person name="Engel K."/>
            <person name="Buchner J."/>
        </authorList>
    </citation>
    <scope>FUNCTION IN PHOSPHORYLATION OF HSPB1</scope>
</reference>
<reference key="7">
    <citation type="journal article" date="1995" name="EMBO J.">
        <title>Identification of novel phosphorylation sites required for activation of MAPKAP kinase-2.</title>
        <authorList>
            <person name="Ben-Levy R."/>
            <person name="Leighton I.A."/>
            <person name="Doza Y.N."/>
            <person name="Attwood P."/>
            <person name="Morrice N."/>
            <person name="Marshall C.J."/>
            <person name="Cohen P."/>
        </authorList>
    </citation>
    <scope>PHOSPHORYLATION AT SER-9; THR-25; THR-222; SER-272 AND THR-334</scope>
    <scope>MUTAGENESIS OF ASP-207; THR-222; SER-272 AND THR-334</scope>
</reference>
<reference key="8">
    <citation type="journal article" date="1996" name="FEBS Lett.">
        <title>A comparison of the substrate specificity of MAPKAP kinase-2 and MAPKAP kinase-3 and their activation by cytokines and cellular stress.</title>
        <authorList>
            <person name="Clifton A.D."/>
            <person name="Young P.R."/>
            <person name="Cohen P."/>
        </authorList>
    </citation>
    <scope>CATALYTIC ACTIVITY</scope>
    <scope>FUNCTION IN PHOSPHORYLATION OF HSPB1</scope>
</reference>
<reference key="9">
    <citation type="journal article" date="1999" name="J. Biol. Chem.">
        <title>Regulation of Hsp27 oligomerization, chaperone function, and protective activity against oxidative stress/tumor necrosis factor alpha by phosphorylation.</title>
        <authorList>
            <person name="Rogalla T."/>
            <person name="Ehrnsperger M."/>
            <person name="Preville X."/>
            <person name="Kotlyarov A."/>
            <person name="Lutsch G."/>
            <person name="Ducasse C."/>
            <person name="Paul C."/>
            <person name="Wieske M."/>
            <person name="Arrigo A.P."/>
            <person name="Buchner J."/>
            <person name="Gaestel M."/>
        </authorList>
    </citation>
    <scope>FUNCTION IN PHOSPHORYLATION OF HSPB1</scope>
</reference>
<reference key="10">
    <citation type="journal article" date="2002" name="EMBO J.">
        <title>Inhibition of SAPK2a/p38 prevents hnRNP A0 phosphorylation by MAPKAP-K2 and its interaction with cytokine mRNAs.</title>
        <authorList>
            <person name="Rousseau S."/>
            <person name="Morrice N."/>
            <person name="Peggie M."/>
            <person name="Campbell D.G."/>
            <person name="Gaestel M."/>
            <person name="Cohen P."/>
        </authorList>
    </citation>
    <scope>FUNCTION IN PHOSPHORYLATION OF HNRNPA0</scope>
</reference>
<reference key="11">
    <citation type="journal article" date="2002" name="J. Biol. Chem.">
        <title>Arachidonic acid promotes phosphorylation of 5-lipoxygenase at Ser-271 by MAPK-activated protein kinase 2 (MK2).</title>
        <authorList>
            <person name="Werz O."/>
            <person name="Szellas D."/>
            <person name="Steinhilber D."/>
            <person name="Radmark O."/>
        </authorList>
    </citation>
    <scope>FUNCTION IN PHOSPHORYLATION OF LOX5</scope>
</reference>
<reference key="12">
    <citation type="journal article" date="2003" name="Biochem. Biophys. Res. Commun.">
        <title>Affinity purification of ARE-binding proteins identifies polyA-binding protein 1 as a potential substrate in MK2-induced mRNA stabilization.</title>
        <authorList>
            <person name="Bollig F."/>
            <person name="Winzen R."/>
            <person name="Gaestel M."/>
            <person name="Kostka S."/>
            <person name="Resch K."/>
            <person name="Holtmann H."/>
        </authorList>
    </citation>
    <scope>FUNCTION IN PHOSPHORYLATION OF PABPC1</scope>
</reference>
<reference key="13">
    <citation type="journal article" date="2003" name="Cell. Signal.">
        <title>MAPK-activated protein kinase-2 participates in p38 MAPK-dependent and ERK-dependent functions in human neutrophils.</title>
        <authorList>
            <person name="Coxon P.Y."/>
            <person name="Rane M.J."/>
            <person name="Uriarte S."/>
            <person name="Powell D.W."/>
            <person name="Singh S."/>
            <person name="Butt W."/>
            <person name="Chen Q."/>
            <person name="McLeish K.R."/>
        </authorList>
    </citation>
    <scope>FUNCTION</scope>
</reference>
<reference key="14">
    <citation type="journal article" date="2003" name="Mol. Cell. Biol.">
        <title>Stabilization of urokinase and urokinase receptor mRNAs by HuR is linked to its cytoplasmic accumulation induced by activated mitogen-activated protein kinase-activated protein kinase 2.</title>
        <authorList>
            <person name="Tran H."/>
            <person name="Maurer F."/>
            <person name="Nagamine Y."/>
        </authorList>
    </citation>
    <scope>FUNCTION IN PHOSPHORYLATION OF ELAVL1</scope>
    <scope>MUTAGENESIS OF LYS-93; THR-222 AND THR-334</scope>
</reference>
<reference key="15">
    <citation type="journal article" date="2004" name="EMBO J.">
        <title>MK2-induced tristetraprolin:14-3-3 complexes prevent stress granule association and ARE-mRNA decay.</title>
        <authorList>
            <person name="Stoecklin G."/>
            <person name="Stubbs T."/>
            <person name="Kedersha N."/>
            <person name="Wax S."/>
            <person name="Rigby W.F."/>
            <person name="Blackwell T.K."/>
            <person name="Anderson P."/>
        </authorList>
    </citation>
    <scope>FUNCTION IN PHOSPHORYLATION OF ZFP36</scope>
    <scope>MUTAGENESIS OF THR-222 AND THR-334</scope>
</reference>
<reference key="16">
    <citation type="journal article" date="2004" name="FEBS Lett.">
        <title>P66(ShcA) interacts with MAPKAP kinase 2 and regulates its activity.</title>
        <authorList>
            <person name="Yannoni Y.M."/>
            <person name="Gaestel M."/>
            <person name="Lin L.L."/>
        </authorList>
    </citation>
    <scope>INTERACTION WITH PHC2</scope>
</reference>
<reference key="17">
    <citation type="journal article" date="2005" name="Mol. Cell">
        <title>MAPKAP kinase-2 is a cell cycle checkpoint kinase that regulates the G2/M transition and S phase progression in response to UV irradiation.</title>
        <authorList>
            <person name="Manke I.A."/>
            <person name="Nguyen A."/>
            <person name="Lim D."/>
            <person name="Stewart M.Q."/>
            <person name="Elia A.E."/>
            <person name="Yaffe M.B."/>
        </authorList>
    </citation>
    <scope>FUNCTION IN PHOSPHORYLATION OF CDC25B AND CDC25C</scope>
</reference>
<reference key="18">
    <citation type="journal article" date="2006" name="EMBO J.">
        <title>MAPKAPK-2-mediated LIM-kinase activation is critical for VEGF-induced actin remodeling and cell migration.</title>
        <authorList>
            <person name="Kobayashi M."/>
            <person name="Nishita M."/>
            <person name="Mishima T."/>
            <person name="Ohashi K."/>
            <person name="Mizuno K."/>
        </authorList>
    </citation>
    <scope>FUNCTION IN PHOSPHORYLATION OF LIMK1</scope>
</reference>
<reference key="19">
    <citation type="journal article" date="2006" name="J. Biol. Chem.">
        <title>Phosphorylation of HSF1 by MAPK-activated protein kinase 2 on serine 121, inhibits transcriptional activity and promotes HSP90 binding.</title>
        <authorList>
            <person name="Wang X."/>
            <person name="Khaleque M.A."/>
            <person name="Zhao M.J."/>
            <person name="Zhong R."/>
            <person name="Gaestel M."/>
            <person name="Calderwood S.K."/>
        </authorList>
    </citation>
    <scope>FUNCTION IN PHOSPHORYLATION OF HSF1</scope>
    <scope>INTERACTION WITH HSF1</scope>
</reference>
<reference key="20">
    <citation type="journal article" date="2007" name="Biochem. Biophys. Res. Commun.">
        <title>MAPKAPK2-mediated LSP1 phosphorylation and FMLP-induced neutrophil polarization.</title>
        <authorList>
            <person name="Wu Y."/>
            <person name="Zhan L."/>
            <person name="Ai Y."/>
            <person name="Hannigan M."/>
            <person name="Gaestel M."/>
            <person name="Huang C.-K."/>
            <person name="Madri J.A."/>
        </authorList>
    </citation>
    <scope>FUNCTION IN PHOSPHORYLATION OF LSP1</scope>
</reference>
<reference key="21">
    <citation type="journal article" date="2008" name="Biochem. J.">
        <title>Roles for TAB1 in regulating the IL-1-dependent phosphorylation of the TAB3 regulatory subunit and activity of the TAK1 complex.</title>
        <authorList>
            <person name="Mendoza H."/>
            <person name="Campbell D.G."/>
            <person name="Burness K."/>
            <person name="Hastie J."/>
            <person name="Ronkina N."/>
            <person name="Shim J.H."/>
            <person name="Arthur J.S."/>
            <person name="Davis R.J."/>
            <person name="Gaestel M."/>
            <person name="Johnson G.L."/>
            <person name="Ghosh S."/>
            <person name="Cohen P."/>
        </authorList>
    </citation>
    <scope>FUNCTION IN PHOSPHORYLATION OF TAB3</scope>
</reference>
<reference key="22">
    <citation type="journal article" date="2008" name="Proc. Natl. Acad. Sci. U.S.A.">
        <title>A quantitative atlas of mitotic phosphorylation.</title>
        <authorList>
            <person name="Dephoure N."/>
            <person name="Zhou C."/>
            <person name="Villen J."/>
            <person name="Beausoleil S.A."/>
            <person name="Bakalarski C.E."/>
            <person name="Elledge S.J."/>
            <person name="Gygi S.P."/>
        </authorList>
    </citation>
    <scope>IDENTIFICATION BY MASS SPECTROMETRY [LARGE SCALE ANALYSIS]</scope>
    <source>
        <tissue>Cervix carcinoma</tissue>
    </source>
</reference>
<reference key="23">
    <citation type="journal article" date="2010" name="Mol. Cell">
        <title>DNA damage activates a spatially distinct late cytoplasmic cell-cycle checkpoint network controlled by MK2-mediated RNA stabilization.</title>
        <authorList>
            <person name="Reinhardt H.C."/>
            <person name="Hasskamp P."/>
            <person name="Schmedding I."/>
            <person name="Morandell S."/>
            <person name="van Vugt M.A."/>
            <person name="Wang X."/>
            <person name="Linding R."/>
            <person name="Ong S.E."/>
            <person name="Weaver D."/>
            <person name="Carr S.A."/>
            <person name="Yaffe M.B."/>
        </authorList>
    </citation>
    <scope>FUNCTION IN PHOSPHORYLATION OF HNRNPA0 AND PARN</scope>
    <scope>SUBCELLULAR LOCATION</scope>
</reference>
<reference key="24">
    <citation type="journal article" date="2011" name="BMC Syst. Biol.">
        <title>Initial characterization of the human central proteome.</title>
        <authorList>
            <person name="Burkard T.R."/>
            <person name="Planyavsky M."/>
            <person name="Kaupe I."/>
            <person name="Breitwieser F.P."/>
            <person name="Buerckstuemmer T."/>
            <person name="Bennett K.L."/>
            <person name="Superti-Furga G."/>
            <person name="Colinge J."/>
        </authorList>
    </citation>
    <scope>IDENTIFICATION BY MASS SPECTROMETRY [LARGE SCALE ANALYSIS]</scope>
</reference>
<reference key="25">
    <citation type="journal article" date="2011" name="Blood">
        <title>MK2 SUMOylation regulates actin filament remodeling and subsequent migration in endothelial cells by inhibiting MK2 kinase and HSP27 phosphorylation.</title>
        <authorList>
            <person name="Chang E."/>
            <person name="Heo K.S."/>
            <person name="Woo C.H."/>
            <person name="Lee H."/>
            <person name="Le N.T."/>
            <person name="Thomas T.N."/>
            <person name="Fujiwara K."/>
            <person name="Abe J."/>
        </authorList>
    </citation>
    <scope>SUMOYLATION AT LYS-353</scope>
    <scope>MUTAGENESIS OF LYS-353</scope>
</reference>
<reference key="26">
    <citation type="journal article" date="2008" name="Front. Biosci.">
        <title>MK2 and MK3--a pair of isoenzymes?</title>
        <authorList>
            <person name="Ronkina N."/>
            <person name="Kotlyarov A."/>
            <person name="Gaestel M."/>
        </authorList>
    </citation>
    <scope>REVIEW</scope>
</reference>
<reference key="27">
    <citation type="journal article" date="2013" name="J. Proteome Res.">
        <title>Toward a comprehensive characterization of a human cancer cell phosphoproteome.</title>
        <authorList>
            <person name="Zhou H."/>
            <person name="Di Palma S."/>
            <person name="Preisinger C."/>
            <person name="Peng M."/>
            <person name="Polat A.N."/>
            <person name="Heck A.J."/>
            <person name="Mohammed S."/>
        </authorList>
    </citation>
    <scope>PHOSPHORYLATION [LARGE SCALE ANALYSIS] AT THR-334</scope>
    <scope>IDENTIFICATION BY MASS SPECTROMETRY [LARGE SCALE ANALYSIS]</scope>
    <source>
        <tissue>Erythroleukemia</tissue>
    </source>
</reference>
<reference key="28">
    <citation type="journal article" date="2014" name="J. Proteomics">
        <title>An enzyme assisted RP-RPLC approach for in-depth analysis of human liver phosphoproteome.</title>
        <authorList>
            <person name="Bian Y."/>
            <person name="Song C."/>
            <person name="Cheng K."/>
            <person name="Dong M."/>
            <person name="Wang F."/>
            <person name="Huang J."/>
            <person name="Sun D."/>
            <person name="Wang L."/>
            <person name="Ye M."/>
            <person name="Zou H."/>
        </authorList>
    </citation>
    <scope>PHOSPHORYLATION [LARGE SCALE ANALYSIS] AT THR-334</scope>
    <scope>IDENTIFICATION BY MASS SPECTROMETRY [LARGE SCALE ANALYSIS]</scope>
    <source>
        <tissue>Liver</tissue>
    </source>
</reference>
<reference key="29">
    <citation type="journal article" date="2015" name="Nat. Commun.">
        <title>p38- and MK2-dependent signalling promotes stress-induced centriolar satellite remodelling via 14-3-3-dependent sequestration of CEP131/AZI1.</title>
        <authorList>
            <person name="Tollenaere M.A."/>
            <person name="Villumsen B.H."/>
            <person name="Blasius M."/>
            <person name="Nielsen J.C."/>
            <person name="Wagner S.A."/>
            <person name="Bartek J."/>
            <person name="Beli P."/>
            <person name="Mailand N."/>
            <person name="Bekker-Jensen S."/>
        </authorList>
    </citation>
    <scope>FUNCTION</scope>
</reference>
<reference key="30">
    <citation type="journal article" date="2002" name="J. Biol. Chem.">
        <title>Structure of mitogen-activated protein kinase-activated protein (MAPKAP) kinase 2 suggests a bifunctional switch that couples kinase activation with nuclear export.</title>
        <authorList>
            <person name="Meng W."/>
            <person name="Swenson L.L."/>
            <person name="Fitzgibbon M.J."/>
            <person name="Hayakawa K."/>
            <person name="Ter Haar E."/>
            <person name="Behrens A.E."/>
            <person name="Fulghum J.R."/>
            <person name="Lippke J.A."/>
        </authorList>
    </citation>
    <scope>X-RAY CRYSTALLOGRAPHY (2.8 ANGSTROMS) IN COMPLEX WITH ADP AND STAUROSPORINE</scope>
    <scope>CATALYTIC ACTIVITY</scope>
</reference>
<reference key="31">
    <citation type="journal article" date="2003" name="Structure">
        <title>Catalytically active MAP KAP kinase 2 structures in complex with staurosporine and ADP reveal differences with the autoinhibited enzyme.</title>
        <authorList>
            <person name="Underwood K.W."/>
            <person name="Parris K.D."/>
            <person name="Federico E."/>
            <person name="Mosyak L."/>
            <person name="Czerwinski R.M."/>
            <person name="Shane T."/>
            <person name="Taylor M."/>
            <person name="Svenson K."/>
            <person name="Liu Y."/>
            <person name="Hsiao C.L."/>
            <person name="Wolfrom S."/>
            <person name="Maguire M."/>
            <person name="Malakian K."/>
            <person name="Telliez J.B."/>
            <person name="Lin L.L."/>
            <person name="Kriz R.W."/>
            <person name="Seehra J."/>
            <person name="Somers W.S."/>
            <person name="Stahl M.L."/>
        </authorList>
    </citation>
    <scope>X-RAY CRYSTALLOGRAPHY (2.7 ANGSTROMS)</scope>
</reference>
<reference key="32">
    <citation type="journal article" date="2007" name="Bioorg. Med. Chem. Lett.">
        <title>The discovery of carboline analogs as potent MAPKAP-K2 inhibitors.</title>
        <authorList>
            <person name="Wu J.P."/>
            <person name="Wang J."/>
            <person name="Abeywardane A."/>
            <person name="Andersen D."/>
            <person name="Emmanuel M."/>
            <person name="Gautschi E."/>
            <person name="Goldberg D.R."/>
            <person name="Kashem M.A."/>
            <person name="Lukas S."/>
            <person name="Mao W."/>
            <person name="Martin L."/>
            <person name="Morwick T."/>
            <person name="Moss N."/>
            <person name="Pargellis C."/>
            <person name="Patel U.R."/>
            <person name="Patnaude L."/>
            <person name="Peet G.W."/>
            <person name="Skow D."/>
            <person name="Snow R.J."/>
            <person name="Ward Y."/>
            <person name="Werneburg B."/>
            <person name="White A."/>
        </authorList>
    </citation>
    <scope>X-RAY CRYSTALLOGRAPHY (2.9 ANGSTROMS) OF 41-364 IN COMPLEX WITH CARBOLINE-BASED INHIBITORS</scope>
</reference>
<reference key="33">
    <citation type="journal article" date="2007" name="J. Biol. Chem.">
        <title>Crystal structure of the p38 alpha-MAPKAP kinase 2 heterodimer.</title>
        <authorList>
            <person name="ter Haar E."/>
            <person name="Prabhakar P."/>
            <person name="Liu X."/>
            <person name="Lepre C."/>
        </authorList>
    </citation>
    <scope>X-RAY CRYSTALLOGRAPHY (4.0 ANGSTROMS) IN COMPLEX WITH MAPK14</scope>
    <scope>INTERACTION WITH MAPK14</scope>
</reference>
<reference key="34">
    <citation type="journal article" date="2007" name="J. Biol. Chem.">
        <authorList>
            <person name="ter Haar E."/>
            <person name="Prabhakar P."/>
            <person name="Liu X."/>
            <person name="Lepre C."/>
        </authorList>
    </citation>
    <scope>ERRATUM OF PUBMED:17255097</scope>
</reference>
<reference key="35">
    <citation type="journal article" date="2007" name="J. Med. Chem.">
        <title>Pyrrolopyridine inhibitors of mitogen-activated protein kinase-activated protein kinase 2 (MK-2).</title>
        <authorList>
            <person name="Anderson D.R."/>
            <person name="Meyers M.J."/>
            <person name="Vernier W.F."/>
            <person name="Mahoney M.W."/>
            <person name="Kurumbail R.G."/>
            <person name="Caspers N."/>
            <person name="Poda G.I."/>
            <person name="Schindler J.F."/>
            <person name="Reitz D.B."/>
            <person name="Mourey R.J."/>
        </authorList>
    </citation>
    <scope>X-RAY CRYSTALLOGRAPHY (3.8 ANGSTROMS) OF 45-371 IN COMPLEX WITH PYRROLOPYRIDINE INHIBITORS</scope>
</reference>
<reference key="36">
    <citation type="journal article" date="2007" name="J. Mol. Biol.">
        <title>Structural basis for a high affinity inhibitor bound to protein kinase MK2.</title>
        <authorList>
            <person name="Hillig R.C."/>
            <person name="Eberspaecher U."/>
            <person name="Monteclaro F."/>
            <person name="Huber M."/>
            <person name="Nguyen D."/>
            <person name="Mengel A."/>
            <person name="Muller-Tiemann B."/>
            <person name="Egner U."/>
        </authorList>
    </citation>
    <scope>X-RAY CRYSTALLOGRAPHY (3.1 ANGSTROMS) OF 41-364 IN COMPLEX WITH PYRROLOPYRIDINE INHIBITOR</scope>
</reference>
<reference key="37">
    <citation type="journal article" date="2007" name="Proc. Natl. Acad. Sci. U.S.A.">
        <title>Molecular basis of MAPK-activated protein kinase 2:p38 assembly.</title>
        <authorList>
            <person name="White A."/>
            <person name="Pargellis C.A."/>
            <person name="Studts J.M."/>
            <person name="Werneburg B.G."/>
            <person name="Farmer B.T. II"/>
        </authorList>
    </citation>
    <scope>X-RAY CRYSTALLOGRAPHY (2.7 ANGSTROMS) OF 47-400 IN COMPLEX WITH MAPK14</scope>
    <scope>INTERACTION WITH MAPK14</scope>
</reference>
<reference key="38">
    <citation type="journal article" date="2007" name="Nature">
        <title>Patterns of somatic mutation in human cancer genomes.</title>
        <authorList>
            <person name="Greenman C."/>
            <person name="Stephens P."/>
            <person name="Smith R."/>
            <person name="Dalgliesh G.L."/>
            <person name="Hunter C."/>
            <person name="Bignell G."/>
            <person name="Davies H."/>
            <person name="Teague J."/>
            <person name="Butler A."/>
            <person name="Stevens C."/>
            <person name="Edkins S."/>
            <person name="O'Meara S."/>
            <person name="Vastrik I."/>
            <person name="Schmidt E.E."/>
            <person name="Avis T."/>
            <person name="Barthorpe S."/>
            <person name="Bhamra G."/>
            <person name="Buck G."/>
            <person name="Choudhury B."/>
            <person name="Clements J."/>
            <person name="Cole J."/>
            <person name="Dicks E."/>
            <person name="Forbes S."/>
            <person name="Gray K."/>
            <person name="Halliday K."/>
            <person name="Harrison R."/>
            <person name="Hills K."/>
            <person name="Hinton J."/>
            <person name="Jenkinson A."/>
            <person name="Jones D."/>
            <person name="Menzies A."/>
            <person name="Mironenko T."/>
            <person name="Perry J."/>
            <person name="Raine K."/>
            <person name="Richardson D."/>
            <person name="Shepherd R."/>
            <person name="Small A."/>
            <person name="Tofts C."/>
            <person name="Varian J."/>
            <person name="Webb T."/>
            <person name="West S."/>
            <person name="Widaa S."/>
            <person name="Yates A."/>
            <person name="Cahill D.P."/>
            <person name="Louis D.N."/>
            <person name="Goldstraw P."/>
            <person name="Nicholson A.G."/>
            <person name="Brasseur F."/>
            <person name="Looijenga L."/>
            <person name="Weber B.L."/>
            <person name="Chiew Y.-E."/>
            <person name="DeFazio A."/>
            <person name="Greaves M.F."/>
            <person name="Green A.R."/>
            <person name="Campbell P."/>
            <person name="Birney E."/>
            <person name="Easton D.F."/>
            <person name="Chenevix-Trench G."/>
            <person name="Tan M.-H."/>
            <person name="Khoo S.K."/>
            <person name="Teh B.T."/>
            <person name="Yuen S.T."/>
            <person name="Leung S.Y."/>
            <person name="Wooster R."/>
            <person name="Futreal P.A."/>
            <person name="Stratton M.R."/>
        </authorList>
    </citation>
    <scope>VARIANTS [LARGE SCALE ANALYSIS] GLY-173 AND SER-361</scope>
</reference>
<keyword id="KW-0002">3D-structure</keyword>
<keyword id="KW-0025">Alternative splicing</keyword>
<keyword id="KW-0067">ATP-binding</keyword>
<keyword id="KW-0963">Cytoplasm</keyword>
<keyword id="KW-0227">DNA damage</keyword>
<keyword id="KW-1017">Isopeptide bond</keyword>
<keyword id="KW-0418">Kinase</keyword>
<keyword id="KW-0547">Nucleotide-binding</keyword>
<keyword id="KW-0539">Nucleus</keyword>
<keyword id="KW-0597">Phosphoprotein</keyword>
<keyword id="KW-1267">Proteomics identification</keyword>
<keyword id="KW-1185">Reference proteome</keyword>
<keyword id="KW-0723">Serine/threonine-protein kinase</keyword>
<keyword id="KW-0808">Transferase</keyword>
<keyword id="KW-0832">Ubl conjugation</keyword>